<protein>
    <recommendedName>
        <fullName>NACHT, LRR and PYD domains-containing protein 4C</fullName>
    </recommendedName>
    <alternativeName>
        <fullName>NALP-alpha</fullName>
    </alternativeName>
</protein>
<sequence length="982" mass="112674">MASFFSDFGLMWYLEELNKKEFMKFKEFLKQEILQLRLKQISWTEVKKASREDLANLLLKHYEEKKAWDMTFKIFQKMNRKDLMERAGREIAGHSKLYQAHLKKKLTHDYARKFNIKVQDFSKQKFTQDDYDRFENFLISKVTAKKPHMVFLQGAAGIGKSLMLTKLMLAWSEGMVFQNKFSYIFYFCCQDVKKMKRASLAELISKEWPKTSAPIEDILSQPEKLLFVIDNLEVMECDMSERESELCDTCTEKQPVRILLSSLLRRKMLPKSSFLISATPETFEKMEGRVECTNVKIVTGFNESNIKMYFRSLFQDKTKTQEIFSLVKENQQLFTVCQVPVLCWMVATCLKKEIEKGRDLVSVCRRTTSLYTTHIFNLFIPQSAQYPSKESQAQLQSLCSLAAEGMWTDTFVFGEEALRRNGIMDSDIPTLLDVRILEKSKKSEKSYIFLHPSIQEVCAAIFYLLKSHMDHPSQDVKSIEALIFTFLKKVKVQWIFFGSFIFGLLHESEQKKLEAFFGHQLSQEIKRQLYQCLETISGNEELQEQVDGMKLFYCLFEMDDEAFLAQAMNCMEQINFVAKDYSDVIVAAHCLQHCSTLKKLSLSTQNVLSEGQEHSYTEKLLMCWHHMCSVLISSKDIYILQVKNTNLNETASLVLYSHLMYPSCTLKALVVNNVTFLCDNRLFFELIQNQCLQHLDLNLTFLSHGDVKLLCDVLSQEECNIEKLMVAACNLSPDDCKVFASVLISSKMLKHLNLSSNNLDKGISSLSKALCHPDCVLKNLVLVNCSLSEQCWDYLSEVLRRNKTLNHLDISSNDLKDEGLKVLCGALSLPDSVLKSLSVRYCLITTSGCQDLAEVLRKNQNLRNLQVSNNKIEDAGVKLLCDAIKHPNCHLENIGLEACALTGACCEDLASAFTHCKTLWGINLQENALDHSGLIVLFEALKQQQCTLHVLGLRITDFDKETQELLMAEEEKNPHLSILSSV</sequence>
<comment type="function">
    <text evidence="1">May be involved in inflammation and recognition of cytosolic pathogen-associated molecular patterns (PAMPs) not intercepted by membrane-bound receptors.</text>
</comment>
<comment type="similarity">
    <text evidence="4">Belongs to the NLRP family.</text>
</comment>
<accession>Q3TKR3</accession>
<accession>Q66X27</accession>
<reference key="1">
    <citation type="journal article" date="2004" name="Hum. Mol. Genet.">
        <title>Age-associated alteration of gene expression patterns in mouse oocytes.</title>
        <authorList>
            <person name="Hamatani T."/>
            <person name="Falco G."/>
            <person name="Carter M.G."/>
            <person name="Akutsu H."/>
            <person name="Stagg C.A."/>
            <person name="Sharov A.A."/>
            <person name="Dudekula D.B."/>
            <person name="VanBuren V."/>
            <person name="Ko M.S.H."/>
        </authorList>
    </citation>
    <scope>NUCLEOTIDE SEQUENCE [MRNA]</scope>
    <source>
        <strain>C57BL/6J</strain>
    </source>
</reference>
<reference key="2">
    <citation type="journal article" date="2005" name="Science">
        <title>The transcriptional landscape of the mammalian genome.</title>
        <authorList>
            <person name="Carninci P."/>
            <person name="Kasukawa T."/>
            <person name="Katayama S."/>
            <person name="Gough J."/>
            <person name="Frith M.C."/>
            <person name="Maeda N."/>
            <person name="Oyama R."/>
            <person name="Ravasi T."/>
            <person name="Lenhard B."/>
            <person name="Wells C."/>
            <person name="Kodzius R."/>
            <person name="Shimokawa K."/>
            <person name="Bajic V.B."/>
            <person name="Brenner S.E."/>
            <person name="Batalov S."/>
            <person name="Forrest A.R."/>
            <person name="Zavolan M."/>
            <person name="Davis M.J."/>
            <person name="Wilming L.G."/>
            <person name="Aidinis V."/>
            <person name="Allen J.E."/>
            <person name="Ambesi-Impiombato A."/>
            <person name="Apweiler R."/>
            <person name="Aturaliya R.N."/>
            <person name="Bailey T.L."/>
            <person name="Bansal M."/>
            <person name="Baxter L."/>
            <person name="Beisel K.W."/>
            <person name="Bersano T."/>
            <person name="Bono H."/>
            <person name="Chalk A.M."/>
            <person name="Chiu K.P."/>
            <person name="Choudhary V."/>
            <person name="Christoffels A."/>
            <person name="Clutterbuck D.R."/>
            <person name="Crowe M.L."/>
            <person name="Dalla E."/>
            <person name="Dalrymple B.P."/>
            <person name="de Bono B."/>
            <person name="Della Gatta G."/>
            <person name="di Bernardo D."/>
            <person name="Down T."/>
            <person name="Engstrom P."/>
            <person name="Fagiolini M."/>
            <person name="Faulkner G."/>
            <person name="Fletcher C.F."/>
            <person name="Fukushima T."/>
            <person name="Furuno M."/>
            <person name="Futaki S."/>
            <person name="Gariboldi M."/>
            <person name="Georgii-Hemming P."/>
            <person name="Gingeras T.R."/>
            <person name="Gojobori T."/>
            <person name="Green R.E."/>
            <person name="Gustincich S."/>
            <person name="Harbers M."/>
            <person name="Hayashi Y."/>
            <person name="Hensch T.K."/>
            <person name="Hirokawa N."/>
            <person name="Hill D."/>
            <person name="Huminiecki L."/>
            <person name="Iacono M."/>
            <person name="Ikeo K."/>
            <person name="Iwama A."/>
            <person name="Ishikawa T."/>
            <person name="Jakt M."/>
            <person name="Kanapin A."/>
            <person name="Katoh M."/>
            <person name="Kawasawa Y."/>
            <person name="Kelso J."/>
            <person name="Kitamura H."/>
            <person name="Kitano H."/>
            <person name="Kollias G."/>
            <person name="Krishnan S.P."/>
            <person name="Kruger A."/>
            <person name="Kummerfeld S.K."/>
            <person name="Kurochkin I.V."/>
            <person name="Lareau L.F."/>
            <person name="Lazarevic D."/>
            <person name="Lipovich L."/>
            <person name="Liu J."/>
            <person name="Liuni S."/>
            <person name="McWilliam S."/>
            <person name="Madan Babu M."/>
            <person name="Madera M."/>
            <person name="Marchionni L."/>
            <person name="Matsuda H."/>
            <person name="Matsuzawa S."/>
            <person name="Miki H."/>
            <person name="Mignone F."/>
            <person name="Miyake S."/>
            <person name="Morris K."/>
            <person name="Mottagui-Tabar S."/>
            <person name="Mulder N."/>
            <person name="Nakano N."/>
            <person name="Nakauchi H."/>
            <person name="Ng P."/>
            <person name="Nilsson R."/>
            <person name="Nishiguchi S."/>
            <person name="Nishikawa S."/>
            <person name="Nori F."/>
            <person name="Ohara O."/>
            <person name="Okazaki Y."/>
            <person name="Orlando V."/>
            <person name="Pang K.C."/>
            <person name="Pavan W.J."/>
            <person name="Pavesi G."/>
            <person name="Pesole G."/>
            <person name="Petrovsky N."/>
            <person name="Piazza S."/>
            <person name="Reed J."/>
            <person name="Reid J.F."/>
            <person name="Ring B.Z."/>
            <person name="Ringwald M."/>
            <person name="Rost B."/>
            <person name="Ruan Y."/>
            <person name="Salzberg S.L."/>
            <person name="Sandelin A."/>
            <person name="Schneider C."/>
            <person name="Schoenbach C."/>
            <person name="Sekiguchi K."/>
            <person name="Semple C.A."/>
            <person name="Seno S."/>
            <person name="Sessa L."/>
            <person name="Sheng Y."/>
            <person name="Shibata Y."/>
            <person name="Shimada H."/>
            <person name="Shimada K."/>
            <person name="Silva D."/>
            <person name="Sinclair B."/>
            <person name="Sperling S."/>
            <person name="Stupka E."/>
            <person name="Sugiura K."/>
            <person name="Sultana R."/>
            <person name="Takenaka Y."/>
            <person name="Taki K."/>
            <person name="Tammoja K."/>
            <person name="Tan S.L."/>
            <person name="Tang S."/>
            <person name="Taylor M.S."/>
            <person name="Tegner J."/>
            <person name="Teichmann S.A."/>
            <person name="Ueda H.R."/>
            <person name="van Nimwegen E."/>
            <person name="Verardo R."/>
            <person name="Wei C.L."/>
            <person name="Yagi K."/>
            <person name="Yamanishi H."/>
            <person name="Zabarovsky E."/>
            <person name="Zhu S."/>
            <person name="Zimmer A."/>
            <person name="Hide W."/>
            <person name="Bult C."/>
            <person name="Grimmond S.M."/>
            <person name="Teasdale R.D."/>
            <person name="Liu E.T."/>
            <person name="Brusic V."/>
            <person name="Quackenbush J."/>
            <person name="Wahlestedt C."/>
            <person name="Mattick J.S."/>
            <person name="Hume D.A."/>
            <person name="Kai C."/>
            <person name="Sasaki D."/>
            <person name="Tomaru Y."/>
            <person name="Fukuda S."/>
            <person name="Kanamori-Katayama M."/>
            <person name="Suzuki M."/>
            <person name="Aoki J."/>
            <person name="Arakawa T."/>
            <person name="Iida J."/>
            <person name="Imamura K."/>
            <person name="Itoh M."/>
            <person name="Kato T."/>
            <person name="Kawaji H."/>
            <person name="Kawagashira N."/>
            <person name="Kawashima T."/>
            <person name="Kojima M."/>
            <person name="Kondo S."/>
            <person name="Konno H."/>
            <person name="Nakano K."/>
            <person name="Ninomiya N."/>
            <person name="Nishio T."/>
            <person name="Okada M."/>
            <person name="Plessy C."/>
            <person name="Shibata K."/>
            <person name="Shiraki T."/>
            <person name="Suzuki S."/>
            <person name="Tagami M."/>
            <person name="Waki K."/>
            <person name="Watahiki A."/>
            <person name="Okamura-Oho Y."/>
            <person name="Suzuki H."/>
            <person name="Kawai J."/>
            <person name="Hayashizaki Y."/>
        </authorList>
    </citation>
    <scope>NUCLEOTIDE SEQUENCE [LARGE SCALE MRNA]</scope>
    <source>
        <strain>C57BL/6J</strain>
    </source>
</reference>
<name>NAL4C_MOUSE</name>
<feature type="chain" id="PRO_0000286331" description="NACHT, LRR and PYD domains-containing protein 4C">
    <location>
        <begin position="1"/>
        <end position="982"/>
    </location>
</feature>
<feature type="domain" description="Pyrin" evidence="2">
    <location>
        <begin position="1"/>
        <end position="93"/>
    </location>
</feature>
<feature type="domain" description="NACHT" evidence="3">
    <location>
        <begin position="148"/>
        <end position="471"/>
    </location>
</feature>
<feature type="repeat" description="LRR 1">
    <location>
        <begin position="594"/>
        <end position="617"/>
    </location>
</feature>
<feature type="repeat" description="LRR 2">
    <location>
        <begin position="689"/>
        <end position="716"/>
    </location>
</feature>
<feature type="repeat" description="LRR 3">
    <location>
        <begin position="746"/>
        <end position="773"/>
    </location>
</feature>
<feature type="repeat" description="LRR 4">
    <location>
        <begin position="802"/>
        <end position="825"/>
    </location>
</feature>
<feature type="repeat" description="LRR 5">
    <location>
        <begin position="827"/>
        <end position="844"/>
    </location>
</feature>
<feature type="repeat" description="LRR 6">
    <location>
        <begin position="859"/>
        <end position="882"/>
    </location>
</feature>
<feature type="repeat" description="LRR 7">
    <location>
        <begin position="916"/>
        <end position="940"/>
    </location>
</feature>
<feature type="binding site" evidence="3">
    <location>
        <begin position="154"/>
        <end position="161"/>
    </location>
    <ligand>
        <name>ATP</name>
        <dbReference type="ChEBI" id="CHEBI:30616"/>
    </ligand>
</feature>
<feature type="sequence conflict" description="In Ref. 1; AAU06315." evidence="4" ref="1">
    <original>E</original>
    <variation>Q</variation>
    <location>
        <position position="892"/>
    </location>
</feature>
<gene>
    <name type="primary">Nlrp4c</name>
    <name type="synonym">Nalp4c</name>
</gene>
<keyword id="KW-0067">ATP-binding</keyword>
<keyword id="KW-0395">Inflammatory response</keyword>
<keyword id="KW-0433">Leucine-rich repeat</keyword>
<keyword id="KW-0547">Nucleotide-binding</keyword>
<keyword id="KW-1185">Reference proteome</keyword>
<keyword id="KW-0677">Repeat</keyword>
<organism>
    <name type="scientific">Mus musculus</name>
    <name type="common">Mouse</name>
    <dbReference type="NCBI Taxonomy" id="10090"/>
    <lineage>
        <taxon>Eukaryota</taxon>
        <taxon>Metazoa</taxon>
        <taxon>Chordata</taxon>
        <taxon>Craniata</taxon>
        <taxon>Vertebrata</taxon>
        <taxon>Euteleostomi</taxon>
        <taxon>Mammalia</taxon>
        <taxon>Eutheria</taxon>
        <taxon>Euarchontoglires</taxon>
        <taxon>Glires</taxon>
        <taxon>Rodentia</taxon>
        <taxon>Myomorpha</taxon>
        <taxon>Muroidea</taxon>
        <taxon>Muridae</taxon>
        <taxon>Murinae</taxon>
        <taxon>Mus</taxon>
        <taxon>Mus</taxon>
    </lineage>
</organism>
<evidence type="ECO:0000250" key="1"/>
<evidence type="ECO:0000255" key="2">
    <source>
        <dbReference type="PROSITE-ProRule" id="PRU00061"/>
    </source>
</evidence>
<evidence type="ECO:0000255" key="3">
    <source>
        <dbReference type="PROSITE-ProRule" id="PRU00136"/>
    </source>
</evidence>
<evidence type="ECO:0000305" key="4"/>
<proteinExistence type="evidence at transcript level"/>
<dbReference type="EMBL" id="AY596194">
    <property type="protein sequence ID" value="AAU06315.1"/>
    <property type="molecule type" value="mRNA"/>
</dbReference>
<dbReference type="EMBL" id="AK166817">
    <property type="protein sequence ID" value="BAE39043.1"/>
    <property type="molecule type" value="mRNA"/>
</dbReference>
<dbReference type="EMBL" id="AK166869">
    <property type="protein sequence ID" value="BAE39081.1"/>
    <property type="molecule type" value="mRNA"/>
</dbReference>
<dbReference type="CCDS" id="CCDS51988.1"/>
<dbReference type="RefSeq" id="NP_113566.2">
    <property type="nucleotide sequence ID" value="NM_031389.2"/>
</dbReference>
<dbReference type="SMR" id="Q3TKR3"/>
<dbReference type="BioGRID" id="219949">
    <property type="interactions" value="1"/>
</dbReference>
<dbReference type="FunCoup" id="Q3TKR3">
    <property type="interactions" value="221"/>
</dbReference>
<dbReference type="STRING" id="10090.ENSMUSP00000046503"/>
<dbReference type="iPTMnet" id="Q3TKR3"/>
<dbReference type="PhosphoSitePlus" id="Q3TKR3"/>
<dbReference type="PaxDb" id="10090-ENSMUSP00000046503"/>
<dbReference type="ProteomicsDB" id="293618"/>
<dbReference type="DNASU" id="83564"/>
<dbReference type="Ensembl" id="ENSMUST00000037728.13">
    <property type="protein sequence ID" value="ENSMUSP00000046503.6"/>
    <property type="gene ID" value="ENSMUSG00000034690.14"/>
</dbReference>
<dbReference type="Ensembl" id="ENSMUST00000121583.2">
    <property type="protein sequence ID" value="ENSMUSP00000113824.2"/>
    <property type="gene ID" value="ENSMUSG00000034690.14"/>
</dbReference>
<dbReference type="Ensembl" id="ENSMUST00000208360.2">
    <property type="protein sequence ID" value="ENSMUSP00000146613.2"/>
    <property type="gene ID" value="ENSMUSG00000034690.14"/>
</dbReference>
<dbReference type="GeneID" id="83564"/>
<dbReference type="KEGG" id="mmu:83564"/>
<dbReference type="UCSC" id="uc009fan.2">
    <property type="organism name" value="mouse"/>
</dbReference>
<dbReference type="AGR" id="MGI:1890518"/>
<dbReference type="CTD" id="83564"/>
<dbReference type="MGI" id="MGI:1890518">
    <property type="gene designation" value="Nlrp4c"/>
</dbReference>
<dbReference type="VEuPathDB" id="HostDB:ENSMUSG00000034690"/>
<dbReference type="eggNOG" id="ENOG502SGVH">
    <property type="taxonomic scope" value="Eukaryota"/>
</dbReference>
<dbReference type="GeneTree" id="ENSGT00940000162284"/>
<dbReference type="HOGENOM" id="CLU_002274_2_1_1"/>
<dbReference type="InParanoid" id="Q3TKR3"/>
<dbReference type="OMA" id="MWLRESI"/>
<dbReference type="OrthoDB" id="120976at2759"/>
<dbReference type="PhylomeDB" id="Q3TKR3"/>
<dbReference type="Reactome" id="R-MMU-3134975">
    <property type="pathway name" value="Regulation of innate immune responses to cytosolic DNA"/>
</dbReference>
<dbReference type="Reactome" id="R-MMU-3270619">
    <property type="pathway name" value="IRF3-mediated induction of type I IFN"/>
</dbReference>
<dbReference type="BioGRID-ORCS" id="83564">
    <property type="hits" value="3 hits in 79 CRISPR screens"/>
</dbReference>
<dbReference type="PRO" id="PR:Q3TKR3"/>
<dbReference type="Proteomes" id="UP000000589">
    <property type="component" value="Chromosome 7"/>
</dbReference>
<dbReference type="RNAct" id="Q3TKR3">
    <property type="molecule type" value="protein"/>
</dbReference>
<dbReference type="Bgee" id="ENSMUSG00000034690">
    <property type="expression patterns" value="Expressed in primary oocyte and 30 other cell types or tissues"/>
</dbReference>
<dbReference type="GO" id="GO:0005524">
    <property type="term" value="F:ATP binding"/>
    <property type="evidence" value="ECO:0007669"/>
    <property type="project" value="UniProtKB-KW"/>
</dbReference>
<dbReference type="GO" id="GO:0006954">
    <property type="term" value="P:inflammatory response"/>
    <property type="evidence" value="ECO:0007669"/>
    <property type="project" value="UniProtKB-KW"/>
</dbReference>
<dbReference type="CDD" id="cd08320">
    <property type="entry name" value="Pyrin_NALPs"/>
    <property type="match status" value="1"/>
</dbReference>
<dbReference type="FunFam" id="1.10.533.10:FF:000056">
    <property type="entry name" value="NACHT, LRR and PYD domains-containing protein 14"/>
    <property type="match status" value="1"/>
</dbReference>
<dbReference type="FunFam" id="3.40.50.300:FF:000442">
    <property type="entry name" value="NACHT, LRR and PYD domains-containing protein 3"/>
    <property type="match status" value="1"/>
</dbReference>
<dbReference type="Gene3D" id="1.10.533.10">
    <property type="entry name" value="Death Domain, Fas"/>
    <property type="match status" value="1"/>
</dbReference>
<dbReference type="Gene3D" id="3.40.50.300">
    <property type="entry name" value="P-loop containing nucleotide triphosphate hydrolases"/>
    <property type="match status" value="1"/>
</dbReference>
<dbReference type="Gene3D" id="3.80.10.10">
    <property type="entry name" value="Ribonuclease Inhibitor"/>
    <property type="match status" value="2"/>
</dbReference>
<dbReference type="InterPro" id="IPR004020">
    <property type="entry name" value="DAPIN"/>
</dbReference>
<dbReference type="InterPro" id="IPR011029">
    <property type="entry name" value="DEATH-like_dom_sf"/>
</dbReference>
<dbReference type="InterPro" id="IPR001611">
    <property type="entry name" value="Leu-rich_rpt"/>
</dbReference>
<dbReference type="InterPro" id="IPR032675">
    <property type="entry name" value="LRR_dom_sf"/>
</dbReference>
<dbReference type="InterPro" id="IPR007111">
    <property type="entry name" value="NACHT_NTPase"/>
</dbReference>
<dbReference type="InterPro" id="IPR041267">
    <property type="entry name" value="NLRP_HD2"/>
</dbReference>
<dbReference type="InterPro" id="IPR050637">
    <property type="entry name" value="NLRP_innate_immun_reg"/>
</dbReference>
<dbReference type="InterPro" id="IPR041075">
    <property type="entry name" value="NOD1/2_WH"/>
</dbReference>
<dbReference type="InterPro" id="IPR027417">
    <property type="entry name" value="P-loop_NTPase"/>
</dbReference>
<dbReference type="PANTHER" id="PTHR45690">
    <property type="entry name" value="NACHT, LRR AND PYD DOMAINS-CONTAINING PROTEIN 12"/>
    <property type="match status" value="1"/>
</dbReference>
<dbReference type="PANTHER" id="PTHR45690:SF6">
    <property type="entry name" value="NACHT, LRR AND PYD DOMAINS-CONTAINING PROTEIN 4"/>
    <property type="match status" value="1"/>
</dbReference>
<dbReference type="Pfam" id="PF13516">
    <property type="entry name" value="LRR_6"/>
    <property type="match status" value="3"/>
</dbReference>
<dbReference type="Pfam" id="PF05729">
    <property type="entry name" value="NACHT"/>
    <property type="match status" value="1"/>
</dbReference>
<dbReference type="Pfam" id="PF17776">
    <property type="entry name" value="NLRC4_HD2"/>
    <property type="match status" value="1"/>
</dbReference>
<dbReference type="Pfam" id="PF17779">
    <property type="entry name" value="NOD2_WH"/>
    <property type="match status" value="1"/>
</dbReference>
<dbReference type="Pfam" id="PF02758">
    <property type="entry name" value="PYRIN"/>
    <property type="match status" value="1"/>
</dbReference>
<dbReference type="SMART" id="SM00368">
    <property type="entry name" value="LRR_RI"/>
    <property type="match status" value="9"/>
</dbReference>
<dbReference type="SMART" id="SM01289">
    <property type="entry name" value="PYRIN"/>
    <property type="match status" value="1"/>
</dbReference>
<dbReference type="SUPFAM" id="SSF47986">
    <property type="entry name" value="DEATH domain"/>
    <property type="match status" value="1"/>
</dbReference>
<dbReference type="SUPFAM" id="SSF52540">
    <property type="entry name" value="P-loop containing nucleoside triphosphate hydrolases"/>
    <property type="match status" value="1"/>
</dbReference>
<dbReference type="SUPFAM" id="SSF52047">
    <property type="entry name" value="RNI-like"/>
    <property type="match status" value="1"/>
</dbReference>
<dbReference type="PROSITE" id="PS50824">
    <property type="entry name" value="DAPIN"/>
    <property type="match status" value="1"/>
</dbReference>
<dbReference type="PROSITE" id="PS51450">
    <property type="entry name" value="LRR"/>
    <property type="match status" value="3"/>
</dbReference>
<dbReference type="PROSITE" id="PS50837">
    <property type="entry name" value="NACHT"/>
    <property type="match status" value="1"/>
</dbReference>